<proteinExistence type="evidence at protein level"/>
<dbReference type="EMBL" id="AY167047">
    <property type="protein sequence ID" value="AAO38028.1"/>
    <property type="molecule type" value="mRNA"/>
</dbReference>
<dbReference type="EMBL" id="AY167048">
    <property type="protein sequence ID" value="AAO38029.1"/>
    <property type="molecule type" value="mRNA"/>
</dbReference>
<dbReference type="EMBL" id="AK056857">
    <property type="protein sequence ID" value="BAB71297.1"/>
    <property type="status" value="ALT_INIT"/>
    <property type="molecule type" value="mRNA"/>
</dbReference>
<dbReference type="EMBL" id="CH471073">
    <property type="protein sequence ID" value="EAW93731.1"/>
    <property type="molecule type" value="Genomic_DNA"/>
</dbReference>
<dbReference type="EMBL" id="BC038669">
    <property type="status" value="NOT_ANNOTATED_CDS"/>
    <property type="molecule type" value="mRNA"/>
</dbReference>
<dbReference type="CCDS" id="CCDS43555.1">
    <molecule id="Q8IXZ3-4"/>
</dbReference>
<dbReference type="CCDS" id="CCDS5372.1">
    <molecule id="Q8IXZ3-3"/>
</dbReference>
<dbReference type="RefSeq" id="NP_874359.2">
    <molecule id="Q8IXZ3-4"/>
    <property type="nucleotide sequence ID" value="NM_182700.5"/>
</dbReference>
<dbReference type="RefSeq" id="NP_945194.1">
    <molecule id="Q8IXZ3-3"/>
    <property type="nucleotide sequence ID" value="NM_198956.4"/>
</dbReference>
<dbReference type="SMR" id="Q8IXZ3"/>
<dbReference type="BioGRID" id="128760">
    <property type="interactions" value="3"/>
</dbReference>
<dbReference type="FunCoup" id="Q8IXZ3">
    <property type="interactions" value="249"/>
</dbReference>
<dbReference type="IntAct" id="Q8IXZ3">
    <property type="interactions" value="4"/>
</dbReference>
<dbReference type="MINT" id="Q8IXZ3"/>
<dbReference type="STRING" id="9606.ENSP00000408792"/>
<dbReference type="iPTMnet" id="Q8IXZ3"/>
<dbReference type="PhosphoSitePlus" id="Q8IXZ3"/>
<dbReference type="BioMuta" id="SP8"/>
<dbReference type="DMDM" id="300669678"/>
<dbReference type="jPOST" id="Q8IXZ3"/>
<dbReference type="MassIVE" id="Q8IXZ3"/>
<dbReference type="PaxDb" id="9606-ENSP00000408792"/>
<dbReference type="PeptideAtlas" id="Q8IXZ3"/>
<dbReference type="ProteomicsDB" id="71080">
    <molecule id="Q8IXZ3-3"/>
</dbReference>
<dbReference type="ProteomicsDB" id="71081">
    <molecule id="Q8IXZ3-1"/>
</dbReference>
<dbReference type="ProteomicsDB" id="71082">
    <molecule id="Q8IXZ3-2"/>
</dbReference>
<dbReference type="Antibodypedia" id="53277">
    <property type="antibodies" value="67 antibodies from 14 providers"/>
</dbReference>
<dbReference type="DNASU" id="221833"/>
<dbReference type="Ensembl" id="ENST00000361443.4">
    <molecule id="Q8IXZ3-3"/>
    <property type="protein sequence ID" value="ENSP00000354482.4"/>
    <property type="gene ID" value="ENSG00000164651.18"/>
</dbReference>
<dbReference type="Ensembl" id="ENST00000418710.3">
    <molecule id="Q8IXZ3-4"/>
    <property type="protein sequence ID" value="ENSP00000408792.2"/>
    <property type="gene ID" value="ENSG00000164651.18"/>
</dbReference>
<dbReference type="GeneID" id="221833"/>
<dbReference type="KEGG" id="hsa:221833"/>
<dbReference type="MANE-Select" id="ENST00000418710.3">
    <molecule id="Q8IXZ3-4"/>
    <property type="protein sequence ID" value="ENSP00000408792.2"/>
    <property type="RefSeq nucleotide sequence ID" value="NM_182700.6"/>
    <property type="RefSeq protein sequence ID" value="NP_874359.2"/>
</dbReference>
<dbReference type="UCSC" id="uc022aak.3">
    <molecule id="Q8IXZ3-3"/>
    <property type="organism name" value="human"/>
</dbReference>
<dbReference type="AGR" id="HGNC:19196"/>
<dbReference type="CTD" id="221833"/>
<dbReference type="DisGeNET" id="221833"/>
<dbReference type="GeneCards" id="SP8"/>
<dbReference type="HGNC" id="HGNC:19196">
    <property type="gene designation" value="SP8"/>
</dbReference>
<dbReference type="HPA" id="ENSG00000164651">
    <property type="expression patterns" value="Tissue enriched (prostate)"/>
</dbReference>
<dbReference type="MIM" id="608306">
    <property type="type" value="gene"/>
</dbReference>
<dbReference type="neXtProt" id="NX_Q8IXZ3"/>
<dbReference type="OpenTargets" id="ENSG00000164651"/>
<dbReference type="PharmGKB" id="PA134893390"/>
<dbReference type="VEuPathDB" id="HostDB:ENSG00000164651"/>
<dbReference type="eggNOG" id="KOG1721">
    <property type="taxonomic scope" value="Eukaryota"/>
</dbReference>
<dbReference type="GeneTree" id="ENSGT00940000162033"/>
<dbReference type="HOGENOM" id="CLU_019484_4_2_1"/>
<dbReference type="InParanoid" id="Q8IXZ3"/>
<dbReference type="OMA" id="GNEYSVF"/>
<dbReference type="OrthoDB" id="6365676at2759"/>
<dbReference type="PAN-GO" id="Q8IXZ3">
    <property type="GO annotations" value="3 GO annotations based on evolutionary models"/>
</dbReference>
<dbReference type="PhylomeDB" id="Q8IXZ3"/>
<dbReference type="TreeFam" id="TF350150"/>
<dbReference type="PathwayCommons" id="Q8IXZ3"/>
<dbReference type="SignaLink" id="Q8IXZ3"/>
<dbReference type="BioGRID-ORCS" id="221833">
    <property type="hits" value="20 hits in 1172 CRISPR screens"/>
</dbReference>
<dbReference type="GeneWiki" id="Sp8_transcription_factor"/>
<dbReference type="GenomeRNAi" id="221833"/>
<dbReference type="Pharos" id="Q8IXZ3">
    <property type="development level" value="Tbio"/>
</dbReference>
<dbReference type="PRO" id="PR:Q8IXZ3"/>
<dbReference type="Proteomes" id="UP000005640">
    <property type="component" value="Chromosome 7"/>
</dbReference>
<dbReference type="RNAct" id="Q8IXZ3">
    <property type="molecule type" value="protein"/>
</dbReference>
<dbReference type="Bgee" id="ENSG00000164651">
    <property type="expression patterns" value="Expressed in pancreatic ductal cell and 62 other cell types or tissues"/>
</dbReference>
<dbReference type="ExpressionAtlas" id="Q8IXZ3">
    <property type="expression patterns" value="baseline and differential"/>
</dbReference>
<dbReference type="GO" id="GO:0000785">
    <property type="term" value="C:chromatin"/>
    <property type="evidence" value="ECO:0000247"/>
    <property type="project" value="NTNU_SB"/>
</dbReference>
<dbReference type="GO" id="GO:0005634">
    <property type="term" value="C:nucleus"/>
    <property type="evidence" value="ECO:0007669"/>
    <property type="project" value="UniProtKB-SubCell"/>
</dbReference>
<dbReference type="GO" id="GO:0000981">
    <property type="term" value="F:DNA-binding transcription factor activity, RNA polymerase II-specific"/>
    <property type="evidence" value="ECO:0000247"/>
    <property type="project" value="NTNU_SB"/>
</dbReference>
<dbReference type="GO" id="GO:0000978">
    <property type="term" value="F:RNA polymerase II cis-regulatory region sequence-specific DNA binding"/>
    <property type="evidence" value="ECO:0000318"/>
    <property type="project" value="GO_Central"/>
</dbReference>
<dbReference type="GO" id="GO:1990837">
    <property type="term" value="F:sequence-specific double-stranded DNA binding"/>
    <property type="evidence" value="ECO:0000314"/>
    <property type="project" value="ARUK-UCL"/>
</dbReference>
<dbReference type="GO" id="GO:0008270">
    <property type="term" value="F:zinc ion binding"/>
    <property type="evidence" value="ECO:0007669"/>
    <property type="project" value="UniProtKB-KW"/>
</dbReference>
<dbReference type="GO" id="GO:0009953">
    <property type="term" value="P:dorsal/ventral pattern formation"/>
    <property type="evidence" value="ECO:0007669"/>
    <property type="project" value="Ensembl"/>
</dbReference>
<dbReference type="GO" id="GO:0030326">
    <property type="term" value="P:embryonic limb morphogenesis"/>
    <property type="evidence" value="ECO:0007669"/>
    <property type="project" value="Ensembl"/>
</dbReference>
<dbReference type="GO" id="GO:0009954">
    <property type="term" value="P:proximal/distal pattern formation"/>
    <property type="evidence" value="ECO:0007669"/>
    <property type="project" value="Ensembl"/>
</dbReference>
<dbReference type="GO" id="GO:0006357">
    <property type="term" value="P:regulation of transcription by RNA polymerase II"/>
    <property type="evidence" value="ECO:0000318"/>
    <property type="project" value="GO_Central"/>
</dbReference>
<dbReference type="CDD" id="cd22538">
    <property type="entry name" value="SP8_N"/>
    <property type="match status" value="1"/>
</dbReference>
<dbReference type="FunFam" id="3.30.160.60:FF:000077">
    <property type="entry name" value="Sp8 transcription factor"/>
    <property type="match status" value="1"/>
</dbReference>
<dbReference type="FunFam" id="3.30.160.60:FF:000014">
    <property type="entry name" value="Transcription factor Sp3"/>
    <property type="match status" value="1"/>
</dbReference>
<dbReference type="FunFam" id="3.30.160.60:FF:000026">
    <property type="entry name" value="Transcription factor Sp3"/>
    <property type="match status" value="1"/>
</dbReference>
<dbReference type="Gene3D" id="3.30.160.60">
    <property type="entry name" value="Classic Zinc Finger"/>
    <property type="match status" value="3"/>
</dbReference>
<dbReference type="InterPro" id="IPR036236">
    <property type="entry name" value="Znf_C2H2_sf"/>
</dbReference>
<dbReference type="InterPro" id="IPR013087">
    <property type="entry name" value="Znf_C2H2_type"/>
</dbReference>
<dbReference type="PANTHER" id="PTHR23235">
    <property type="entry name" value="KRUEPPEL-LIKE TRANSCRIPTION FACTOR"/>
    <property type="match status" value="1"/>
</dbReference>
<dbReference type="PANTHER" id="PTHR23235:SF25">
    <property type="entry name" value="TRANSCRIPTION FACTOR SP8"/>
    <property type="match status" value="1"/>
</dbReference>
<dbReference type="Pfam" id="PF00096">
    <property type="entry name" value="zf-C2H2"/>
    <property type="match status" value="3"/>
</dbReference>
<dbReference type="SMART" id="SM00355">
    <property type="entry name" value="ZnF_C2H2"/>
    <property type="match status" value="3"/>
</dbReference>
<dbReference type="SUPFAM" id="SSF57667">
    <property type="entry name" value="beta-beta-alpha zinc fingers"/>
    <property type="match status" value="2"/>
</dbReference>
<dbReference type="PROSITE" id="PS00028">
    <property type="entry name" value="ZINC_FINGER_C2H2_1"/>
    <property type="match status" value="3"/>
</dbReference>
<dbReference type="PROSITE" id="PS50157">
    <property type="entry name" value="ZINC_FINGER_C2H2_2"/>
    <property type="match status" value="3"/>
</dbReference>
<accession>Q8IXZ3</accession>
<accession>Q7Z615</accession>
<accession>Q7Z616</accession>
<accession>Q96MJ1</accession>
<reference key="1">
    <citation type="journal article" date="2004" name="BMC Genomics">
        <title>Genomic structure and cloning of two transcript isoforms of human Sp8.</title>
        <authorList>
            <person name="Milona M.-A."/>
            <person name="Gough J.E."/>
            <person name="Edgar A.J."/>
        </authorList>
    </citation>
    <scope>NUCLEOTIDE SEQUENCE [MRNA] (ISOFORMS 3 AND 4)</scope>
    <scope>ALTERNATIVE SPLICING</scope>
</reference>
<reference key="2">
    <citation type="journal article" date="2004" name="Nat. Genet.">
        <title>Complete sequencing and characterization of 21,243 full-length human cDNAs.</title>
        <authorList>
            <person name="Ota T."/>
            <person name="Suzuki Y."/>
            <person name="Nishikawa T."/>
            <person name="Otsuki T."/>
            <person name="Sugiyama T."/>
            <person name="Irie R."/>
            <person name="Wakamatsu A."/>
            <person name="Hayashi K."/>
            <person name="Sato H."/>
            <person name="Nagai K."/>
            <person name="Kimura K."/>
            <person name="Makita H."/>
            <person name="Sekine M."/>
            <person name="Obayashi M."/>
            <person name="Nishi T."/>
            <person name="Shibahara T."/>
            <person name="Tanaka T."/>
            <person name="Ishii S."/>
            <person name="Yamamoto J."/>
            <person name="Saito K."/>
            <person name="Kawai Y."/>
            <person name="Isono Y."/>
            <person name="Nakamura Y."/>
            <person name="Nagahari K."/>
            <person name="Murakami K."/>
            <person name="Yasuda T."/>
            <person name="Iwayanagi T."/>
            <person name="Wagatsuma M."/>
            <person name="Shiratori A."/>
            <person name="Sudo H."/>
            <person name="Hosoiri T."/>
            <person name="Kaku Y."/>
            <person name="Kodaira H."/>
            <person name="Kondo H."/>
            <person name="Sugawara M."/>
            <person name="Takahashi M."/>
            <person name="Kanda K."/>
            <person name="Yokoi T."/>
            <person name="Furuya T."/>
            <person name="Kikkawa E."/>
            <person name="Omura Y."/>
            <person name="Abe K."/>
            <person name="Kamihara K."/>
            <person name="Katsuta N."/>
            <person name="Sato K."/>
            <person name="Tanikawa M."/>
            <person name="Yamazaki M."/>
            <person name="Ninomiya K."/>
            <person name="Ishibashi T."/>
            <person name="Yamashita H."/>
            <person name="Murakawa K."/>
            <person name="Fujimori K."/>
            <person name="Tanai H."/>
            <person name="Kimata M."/>
            <person name="Watanabe M."/>
            <person name="Hiraoka S."/>
            <person name="Chiba Y."/>
            <person name="Ishida S."/>
            <person name="Ono Y."/>
            <person name="Takiguchi S."/>
            <person name="Watanabe S."/>
            <person name="Yosida M."/>
            <person name="Hotuta T."/>
            <person name="Kusano J."/>
            <person name="Kanehori K."/>
            <person name="Takahashi-Fujii A."/>
            <person name="Hara H."/>
            <person name="Tanase T.-O."/>
            <person name="Nomura Y."/>
            <person name="Togiya S."/>
            <person name="Komai F."/>
            <person name="Hara R."/>
            <person name="Takeuchi K."/>
            <person name="Arita M."/>
            <person name="Imose N."/>
            <person name="Musashino K."/>
            <person name="Yuuki H."/>
            <person name="Oshima A."/>
            <person name="Sasaki N."/>
            <person name="Aotsuka S."/>
            <person name="Yoshikawa Y."/>
            <person name="Matsunawa H."/>
            <person name="Ichihara T."/>
            <person name="Shiohata N."/>
            <person name="Sano S."/>
            <person name="Moriya S."/>
            <person name="Momiyama H."/>
            <person name="Satoh N."/>
            <person name="Takami S."/>
            <person name="Terashima Y."/>
            <person name="Suzuki O."/>
            <person name="Nakagawa S."/>
            <person name="Senoh A."/>
            <person name="Mizoguchi H."/>
            <person name="Goto Y."/>
            <person name="Shimizu F."/>
            <person name="Wakebe H."/>
            <person name="Hishigaki H."/>
            <person name="Watanabe T."/>
            <person name="Sugiyama A."/>
            <person name="Takemoto M."/>
            <person name="Kawakami B."/>
            <person name="Yamazaki M."/>
            <person name="Watanabe K."/>
            <person name="Kumagai A."/>
            <person name="Itakura S."/>
            <person name="Fukuzumi Y."/>
            <person name="Fujimori Y."/>
            <person name="Komiyama M."/>
            <person name="Tashiro H."/>
            <person name="Tanigami A."/>
            <person name="Fujiwara T."/>
            <person name="Ono T."/>
            <person name="Yamada K."/>
            <person name="Fujii Y."/>
            <person name="Ozaki K."/>
            <person name="Hirao M."/>
            <person name="Ohmori Y."/>
            <person name="Kawabata A."/>
            <person name="Hikiji T."/>
            <person name="Kobatake N."/>
            <person name="Inagaki H."/>
            <person name="Ikema Y."/>
            <person name="Okamoto S."/>
            <person name="Okitani R."/>
            <person name="Kawakami T."/>
            <person name="Noguchi S."/>
            <person name="Itoh T."/>
            <person name="Shigeta K."/>
            <person name="Senba T."/>
            <person name="Matsumura K."/>
            <person name="Nakajima Y."/>
            <person name="Mizuno T."/>
            <person name="Morinaga M."/>
            <person name="Sasaki M."/>
            <person name="Togashi T."/>
            <person name="Oyama M."/>
            <person name="Hata H."/>
            <person name="Watanabe M."/>
            <person name="Komatsu T."/>
            <person name="Mizushima-Sugano J."/>
            <person name="Satoh T."/>
            <person name="Shirai Y."/>
            <person name="Takahashi Y."/>
            <person name="Nakagawa K."/>
            <person name="Okumura K."/>
            <person name="Nagase T."/>
            <person name="Nomura N."/>
            <person name="Kikuchi H."/>
            <person name="Masuho Y."/>
            <person name="Yamashita R."/>
            <person name="Nakai K."/>
            <person name="Yada T."/>
            <person name="Nakamura Y."/>
            <person name="Ohara O."/>
            <person name="Isogai T."/>
            <person name="Sugano S."/>
        </authorList>
    </citation>
    <scope>NUCLEOTIDE SEQUENCE [LARGE SCALE MRNA] (ISOFORM 2)</scope>
    <source>
        <tissue>Prostate</tissue>
    </source>
</reference>
<reference key="3">
    <citation type="submission" date="2005-07" db="EMBL/GenBank/DDBJ databases">
        <authorList>
            <person name="Mural R.J."/>
            <person name="Istrail S."/>
            <person name="Sutton G."/>
            <person name="Florea L."/>
            <person name="Halpern A.L."/>
            <person name="Mobarry C.M."/>
            <person name="Lippert R."/>
            <person name="Walenz B."/>
            <person name="Shatkay H."/>
            <person name="Dew I."/>
            <person name="Miller J.R."/>
            <person name="Flanigan M.J."/>
            <person name="Edwards N.J."/>
            <person name="Bolanos R."/>
            <person name="Fasulo D."/>
            <person name="Halldorsson B.V."/>
            <person name="Hannenhalli S."/>
            <person name="Turner R."/>
            <person name="Yooseph S."/>
            <person name="Lu F."/>
            <person name="Nusskern D.R."/>
            <person name="Shue B.C."/>
            <person name="Zheng X.H."/>
            <person name="Zhong F."/>
            <person name="Delcher A.L."/>
            <person name="Huson D.H."/>
            <person name="Kravitz S.A."/>
            <person name="Mouchard L."/>
            <person name="Reinert K."/>
            <person name="Remington K.A."/>
            <person name="Clark A.G."/>
            <person name="Waterman M.S."/>
            <person name="Eichler E.E."/>
            <person name="Adams M.D."/>
            <person name="Hunkapiller M.W."/>
            <person name="Myers E.W."/>
            <person name="Venter J.C."/>
        </authorList>
    </citation>
    <scope>NUCLEOTIDE SEQUENCE [LARGE SCALE GENOMIC DNA]</scope>
</reference>
<reference key="4">
    <citation type="journal article" date="2004" name="Genome Res.">
        <title>The status, quality, and expansion of the NIH full-length cDNA project: the Mammalian Gene Collection (MGC).</title>
        <authorList>
            <consortium name="The MGC Project Team"/>
        </authorList>
    </citation>
    <scope>NUCLEOTIDE SEQUENCE [LARGE SCALE MRNA] (ISOFORM 1)</scope>
    <source>
        <tissue>Brain</tissue>
    </source>
</reference>
<reference key="5">
    <citation type="journal article" date="2013" name="J. Proteome Res.">
        <title>Toward a comprehensive characterization of a human cancer cell phosphoproteome.</title>
        <authorList>
            <person name="Zhou H."/>
            <person name="Di Palma S."/>
            <person name="Preisinger C."/>
            <person name="Peng M."/>
            <person name="Polat A.N."/>
            <person name="Heck A.J."/>
            <person name="Mohammed S."/>
        </authorList>
    </citation>
    <scope>IDENTIFICATION BY MASS SPECTROMETRY [LARGE SCALE ANALYSIS]</scope>
    <source>
        <tissue>Erythroleukemia</tissue>
    </source>
</reference>
<reference key="6">
    <citation type="journal article" date="2020" name="Cell. Mol. Life Sci.">
        <title>The evolution of the 9aaTAD domain in Sp2 proteins: inactivation with valines and intron reservoirs.</title>
        <authorList>
            <person name="Piskacek M."/>
            <person name="Havelka M."/>
            <person name="Jendruchova K."/>
            <person name="Knight A."/>
            <person name="Keegan L.P."/>
        </authorList>
    </citation>
    <scope>9AATAD MOTIF</scope>
</reference>
<sequence>MLAATCNKIGSPSPSPSSLSDSSSSFGKGFHPWKRSSSSSSASCNVVGSSLSSFGVSGASRNGGSSSAAAAAAAAAAAAAALVSDSFSCGGSPGSSAFSLTSSSAAAAAAAAAAAASSSPFANDYSVFQAPGVSGGSGGGGGGGGGGSSAHSQDGSHQPVFISKVHTSVDGLQGIYPRVGMAHPYESWFKPSHPGLGAAGEVGSAGASSWWDVGAGWIDVQNPNSAAALPGSLHPAAGGLQTSLHSPLGGYNSDYSGLSHSAFSSGASSHLLSPAGQHLMDGFKPVLPGSYPDSAPSPLAGAGGSMLSAGPSAPLGGSPRSSARRYSGRATCDCPNCQEAERLGPAGASLRRKGLHSCHIPGCGKVYGKTSHLKAHLRWHTGERPFVCNWLFCGKRFTRSDELQRHLRTHTGEKRFACPVCNKRFMRSDHLSKHVKTHSGGGGGGGSAGSGSGGKKGSDTDSEHSAAGSPPCHSPELLQPPEPGHRNGLE</sequence>
<comment type="function">
    <text evidence="1">Transcription factor which plays a key role in limb development. Positively regulates FGF8 expression in the apical ectodermal ridge (AER) and contributes to limb outgrowth in embryos (By similarity).</text>
</comment>
<comment type="subcellular location">
    <subcellularLocation>
        <location evidence="8">Nucleus</location>
    </subcellularLocation>
</comment>
<comment type="alternative products">
    <event type="alternative splicing"/>
    <isoform>
        <id>Q8IXZ3-3</id>
        <name>3</name>
        <sequence type="displayed"/>
    </isoform>
    <isoform>
        <id>Q8IXZ3-1</id>
        <name>1</name>
        <sequence type="described" ref="VSP_011036"/>
    </isoform>
    <isoform>
        <id>Q8IXZ3-2</id>
        <name>2</name>
        <sequence type="described" ref="VSP_007441"/>
    </isoform>
    <isoform>
        <id>Q8IXZ3-4</id>
        <name>4</name>
        <name>Sp8L</name>
        <sequence type="described" ref="VSP_044094"/>
    </isoform>
</comment>
<comment type="domain">
    <text evidence="4">The 9aaTAD motif is a transactivation domain present in a large number of yeast and animal transcription factors.</text>
</comment>
<comment type="similarity">
    <text evidence="8">Belongs to the Sp1 C2H2-type zinc-finger protein family.</text>
</comment>
<comment type="sequence caution" evidence="8">
    <conflict type="erroneous initiation">
        <sequence resource="EMBL-CDS" id="BAB71297"/>
    </conflict>
    <text>Extended N-terminus.</text>
</comment>
<keyword id="KW-0025">Alternative splicing</keyword>
<keyword id="KW-0238">DNA-binding</keyword>
<keyword id="KW-0479">Metal-binding</keyword>
<keyword id="KW-0539">Nucleus</keyword>
<keyword id="KW-1267">Proteomics identification</keyword>
<keyword id="KW-1185">Reference proteome</keyword>
<keyword id="KW-0677">Repeat</keyword>
<keyword id="KW-0804">Transcription</keyword>
<keyword id="KW-0805">Transcription regulation</keyword>
<keyword id="KW-0862">Zinc</keyword>
<keyword id="KW-0863">Zinc-finger</keyword>
<gene>
    <name type="primary">SP8</name>
</gene>
<feature type="chain" id="PRO_0000047152" description="Transcription factor Sp8">
    <location>
        <begin position="1"/>
        <end position="490"/>
    </location>
</feature>
<feature type="zinc finger region" description="C2H2-type 1" evidence="2">
    <location>
        <begin position="314"/>
        <end position="338"/>
    </location>
</feature>
<feature type="zinc finger region" description="C2H2-type 2" evidence="2">
    <location>
        <begin position="344"/>
        <end position="368"/>
    </location>
</feature>
<feature type="zinc finger region" description="C2H2-type 3" evidence="2">
    <location>
        <begin position="374"/>
        <end position="396"/>
    </location>
</feature>
<feature type="region of interest" description="Disordered" evidence="3">
    <location>
        <begin position="1"/>
        <end position="47"/>
    </location>
</feature>
<feature type="region of interest" description="Disordered" evidence="3">
    <location>
        <begin position="136"/>
        <end position="156"/>
    </location>
</feature>
<feature type="region of interest" description="Disordered" evidence="3">
    <location>
        <begin position="294"/>
        <end position="324"/>
    </location>
</feature>
<feature type="region of interest" description="Disordered" evidence="3">
    <location>
        <begin position="431"/>
        <end position="490"/>
    </location>
</feature>
<feature type="short sequence motif" description="9aaTAD" evidence="4">
    <location>
        <begin position="208"/>
        <end position="216"/>
    </location>
</feature>
<feature type="compositionally biased region" description="Low complexity" evidence="3">
    <location>
        <begin position="16"/>
        <end position="25"/>
    </location>
</feature>
<feature type="compositionally biased region" description="Low complexity" evidence="3">
    <location>
        <begin position="36"/>
        <end position="47"/>
    </location>
</feature>
<feature type="compositionally biased region" description="Gly residues" evidence="3">
    <location>
        <begin position="136"/>
        <end position="148"/>
    </location>
</feature>
<feature type="compositionally biased region" description="Low complexity" evidence="3">
    <location>
        <begin position="297"/>
        <end position="314"/>
    </location>
</feature>
<feature type="compositionally biased region" description="Gly residues" evidence="3">
    <location>
        <begin position="439"/>
        <end position="455"/>
    </location>
</feature>
<feature type="splice variant" id="VSP_044094" description="In isoform 4." evidence="7">
    <original>M</original>
    <variation>MATSLLGEEPRLGSTPLAM</variation>
    <location>
        <position position="1"/>
    </location>
</feature>
<feature type="splice variant" id="VSP_007441" description="In isoform 2." evidence="5">
    <location>
        <begin position="92"/>
        <end position="147"/>
    </location>
</feature>
<feature type="splice variant" id="VSP_011036" description="In isoform 1." evidence="6">
    <location>
        <begin position="104"/>
        <end position="145"/>
    </location>
</feature>
<feature type="sequence conflict" description="In Ref. 4; BC038669." evidence="8" ref="4">
    <original>H</original>
    <variation>R</variation>
    <location>
        <position position="430"/>
    </location>
</feature>
<protein>
    <recommendedName>
        <fullName>Transcription factor Sp8</fullName>
    </recommendedName>
    <alternativeName>
        <fullName>Specificity protein 8</fullName>
    </alternativeName>
</protein>
<organism>
    <name type="scientific">Homo sapiens</name>
    <name type="common">Human</name>
    <dbReference type="NCBI Taxonomy" id="9606"/>
    <lineage>
        <taxon>Eukaryota</taxon>
        <taxon>Metazoa</taxon>
        <taxon>Chordata</taxon>
        <taxon>Craniata</taxon>
        <taxon>Vertebrata</taxon>
        <taxon>Euteleostomi</taxon>
        <taxon>Mammalia</taxon>
        <taxon>Eutheria</taxon>
        <taxon>Euarchontoglires</taxon>
        <taxon>Primates</taxon>
        <taxon>Haplorrhini</taxon>
        <taxon>Catarrhini</taxon>
        <taxon>Hominidae</taxon>
        <taxon>Homo</taxon>
    </lineage>
</organism>
<evidence type="ECO:0000250" key="1"/>
<evidence type="ECO:0000255" key="2">
    <source>
        <dbReference type="PROSITE-ProRule" id="PRU00042"/>
    </source>
</evidence>
<evidence type="ECO:0000256" key="3">
    <source>
        <dbReference type="SAM" id="MobiDB-lite"/>
    </source>
</evidence>
<evidence type="ECO:0000269" key="4">
    <source>
    </source>
</evidence>
<evidence type="ECO:0000303" key="5">
    <source>
    </source>
</evidence>
<evidence type="ECO:0000303" key="6">
    <source>
    </source>
</evidence>
<evidence type="ECO:0000303" key="7">
    <source>
    </source>
</evidence>
<evidence type="ECO:0000305" key="8"/>
<name>SP8_HUMAN</name>